<evidence type="ECO:0000250" key="1"/>
<evidence type="ECO:0000305" key="2"/>
<sequence>MSWQTYVDDHLMADIEGQQGHHLAAAAILGHDGSVWAQSSTFPKFKPEEITNIMKDFDEPGHLAPTGLFLGGAKYMVIQGEPGAVIRGKKGSGGITIKKTNQALIFGIYEEPVTPGQCNMVVEKIRDYLVDQGY</sequence>
<organism>
    <name type="scientific">Nicotiana tabacum</name>
    <name type="common">Common tobacco</name>
    <dbReference type="NCBI Taxonomy" id="4097"/>
    <lineage>
        <taxon>Eukaryota</taxon>
        <taxon>Viridiplantae</taxon>
        <taxon>Streptophyta</taxon>
        <taxon>Embryophyta</taxon>
        <taxon>Tracheophyta</taxon>
        <taxon>Spermatophyta</taxon>
        <taxon>Magnoliopsida</taxon>
        <taxon>eudicotyledons</taxon>
        <taxon>Gunneridae</taxon>
        <taxon>Pentapetalae</taxon>
        <taxon>asterids</taxon>
        <taxon>lamiids</taxon>
        <taxon>Solanales</taxon>
        <taxon>Solanaceae</taxon>
        <taxon>Nicotianoideae</taxon>
        <taxon>Nicotianeae</taxon>
        <taxon>Nicotiana</taxon>
    </lineage>
</organism>
<accession>P41372</accession>
<protein>
    <recommendedName>
        <fullName>Profilin-1</fullName>
    </recommendedName>
</protein>
<name>PROF1_TOBAC</name>
<dbReference type="EMBL" id="X82120">
    <property type="protein sequence ID" value="CAA57632.1"/>
    <property type="molecule type" value="mRNA"/>
</dbReference>
<dbReference type="PIR" id="S51835">
    <property type="entry name" value="S51835"/>
</dbReference>
<dbReference type="SMR" id="P41372"/>
<dbReference type="STRING" id="4097.P41372"/>
<dbReference type="Allergome" id="1407">
    <property type="allergen name" value="Nic t 8"/>
</dbReference>
<dbReference type="PaxDb" id="4097-P41372"/>
<dbReference type="Proteomes" id="UP000084051">
    <property type="component" value="Unplaced"/>
</dbReference>
<dbReference type="GO" id="GO:0005938">
    <property type="term" value="C:cell cortex"/>
    <property type="evidence" value="ECO:0000318"/>
    <property type="project" value="GO_Central"/>
</dbReference>
<dbReference type="GO" id="GO:0005856">
    <property type="term" value="C:cytoskeleton"/>
    <property type="evidence" value="ECO:0007669"/>
    <property type="project" value="UniProtKB-SubCell"/>
</dbReference>
<dbReference type="GO" id="GO:0003785">
    <property type="term" value="F:actin monomer binding"/>
    <property type="evidence" value="ECO:0000318"/>
    <property type="project" value="GO_Central"/>
</dbReference>
<dbReference type="CDD" id="cd00148">
    <property type="entry name" value="PROF"/>
    <property type="match status" value="1"/>
</dbReference>
<dbReference type="FunFam" id="3.30.450.30:FF:000001">
    <property type="entry name" value="Profilin"/>
    <property type="match status" value="1"/>
</dbReference>
<dbReference type="Gene3D" id="3.30.450.30">
    <property type="entry name" value="Dynein light chain 2a, cytoplasmic"/>
    <property type="match status" value="1"/>
</dbReference>
<dbReference type="InterPro" id="IPR048278">
    <property type="entry name" value="PFN"/>
</dbReference>
<dbReference type="InterPro" id="IPR005455">
    <property type="entry name" value="PFN_euk"/>
</dbReference>
<dbReference type="InterPro" id="IPR036140">
    <property type="entry name" value="PFN_sf"/>
</dbReference>
<dbReference type="InterPro" id="IPR027310">
    <property type="entry name" value="Profilin_CS"/>
</dbReference>
<dbReference type="PANTHER" id="PTHR11604">
    <property type="entry name" value="PROFILIN"/>
    <property type="match status" value="1"/>
</dbReference>
<dbReference type="PANTHER" id="PTHR11604:SF25">
    <property type="entry name" value="PROFILIN-5"/>
    <property type="match status" value="1"/>
</dbReference>
<dbReference type="Pfam" id="PF00235">
    <property type="entry name" value="Profilin"/>
    <property type="match status" value="1"/>
</dbReference>
<dbReference type="PRINTS" id="PR00392">
    <property type="entry name" value="PROFILIN"/>
</dbReference>
<dbReference type="PRINTS" id="PR01640">
    <property type="entry name" value="PROFILINPLNT"/>
</dbReference>
<dbReference type="SMART" id="SM00392">
    <property type="entry name" value="PROF"/>
    <property type="match status" value="1"/>
</dbReference>
<dbReference type="SUPFAM" id="SSF55770">
    <property type="entry name" value="Profilin (actin-binding protein)"/>
    <property type="match status" value="1"/>
</dbReference>
<dbReference type="PROSITE" id="PS00414">
    <property type="entry name" value="PROFILIN"/>
    <property type="match status" value="1"/>
</dbReference>
<gene>
    <name type="primary">PRO1</name>
</gene>
<keyword id="KW-0009">Actin-binding</keyword>
<keyword id="KW-0963">Cytoplasm</keyword>
<keyword id="KW-0206">Cytoskeleton</keyword>
<keyword id="KW-1185">Reference proteome</keyword>
<comment type="function">
    <text>Binds to actin and affects the structure of the cytoskeleton. At high concentrations, profilin prevents the polymerization of actin, whereas it enhances it at low concentrations. By binding to PIP2, it inhibits the formation of IP3 and DG.</text>
</comment>
<comment type="subunit">
    <text>Occurs in many kinds of cells as a complex with monomeric actin in a 1:1 ratio.</text>
</comment>
<comment type="subcellular location">
    <subcellularLocation>
        <location>Cytoplasm</location>
        <location>Cytoskeleton</location>
    </subcellularLocation>
</comment>
<comment type="similarity">
    <text evidence="2">Belongs to the profilin family.</text>
</comment>
<proteinExistence type="evidence at transcript level"/>
<reference key="1">
    <citation type="journal article" date="1995" name="Plant Mol. Biol.">
        <title>Molecular cloning and characterization of profilin from tobacco (Nicotiana tabacum): increased profilin expression during pollen maturation.</title>
        <authorList>
            <person name="Mittermann I."/>
            <person name="Swoboda I."/>
            <person name="Pierson E."/>
            <person name="Eller N."/>
            <person name="Kraft D."/>
            <person name="Valenta R."/>
            <person name="Heberle-Bors E."/>
        </authorList>
    </citation>
    <scope>NUCLEOTIDE SEQUENCE [MRNA]</scope>
    <source>
        <strain>cv. Petit Havana</strain>
        <tissue>Pollen</tissue>
    </source>
</reference>
<feature type="initiator methionine" description="Removed" evidence="1">
    <location>
        <position position="1"/>
    </location>
</feature>
<feature type="chain" id="PRO_0000199674" description="Profilin-1">
    <location>
        <begin position="2"/>
        <end position="134"/>
    </location>
</feature>